<feature type="chain" id="PRO_0000317149" description="25S rRNA (cytosine-C(5))-methyltransferase nop2">
    <location>
        <begin position="1"/>
        <end position="608"/>
    </location>
</feature>
<feature type="region of interest" description="Disordered" evidence="4">
    <location>
        <begin position="1"/>
        <end position="130"/>
    </location>
</feature>
<feature type="region of interest" description="Disordered" evidence="4">
    <location>
        <begin position="145"/>
        <end position="169"/>
    </location>
</feature>
<feature type="compositionally biased region" description="Basic and acidic residues" evidence="4">
    <location>
        <begin position="16"/>
        <end position="29"/>
    </location>
</feature>
<feature type="compositionally biased region" description="Basic residues" evidence="4">
    <location>
        <begin position="30"/>
        <end position="45"/>
    </location>
</feature>
<feature type="compositionally biased region" description="Acidic residues" evidence="4">
    <location>
        <begin position="68"/>
        <end position="116"/>
    </location>
</feature>
<feature type="compositionally biased region" description="Acidic residues" evidence="4">
    <location>
        <begin position="147"/>
        <end position="158"/>
    </location>
</feature>
<feature type="active site" description="Nucleophile" evidence="3">
    <location>
        <position position="473"/>
    </location>
</feature>
<feature type="binding site" evidence="3">
    <location>
        <begin position="347"/>
        <end position="353"/>
    </location>
    <ligand>
        <name>S-adenosyl-L-methionine</name>
        <dbReference type="ChEBI" id="CHEBI:59789"/>
    </ligand>
</feature>
<feature type="binding site" evidence="3">
    <location>
        <position position="371"/>
    </location>
    <ligand>
        <name>S-adenosyl-L-methionine</name>
        <dbReference type="ChEBI" id="CHEBI:59789"/>
    </ligand>
</feature>
<feature type="binding site" evidence="3">
    <location>
        <position position="398"/>
    </location>
    <ligand>
        <name>S-adenosyl-L-methionine</name>
        <dbReference type="ChEBI" id="CHEBI:59789"/>
    </ligand>
</feature>
<feature type="binding site" evidence="3">
    <location>
        <position position="416"/>
    </location>
    <ligand>
        <name>S-adenosyl-L-methionine</name>
        <dbReference type="ChEBI" id="CHEBI:59789"/>
    </ligand>
</feature>
<feature type="modified residue" description="Phosphoserine" evidence="6">
    <location>
        <position position="58"/>
    </location>
</feature>
<feature type="modified residue" description="Phosphoserine" evidence="6">
    <location>
        <position position="60"/>
    </location>
</feature>
<accession>O94268</accession>
<sequence>MGRKQKSKQGIPPTLEENHNSSHKVTENAKKRKHSKEKPQNSRKRQLAEEKKSLFENSDSENEKDLIDADEFEEAETLSDLEHDEEPQTFADEFIDDEAKECEGEEEDSVFDSDEEHEVKPMFSDDSGDEEDLELANMEAMSRKLDEEAELEEKEAEEELHTNIHPEAPTVLPPIDGFTDSQPISTLPQDLSQIQLRIQEIVRVLNDFKNLCEPGRNRSEYVDQLLNDICAYYGYSRFLAEKLFELFSVSEAVEFFEANEMPRPVTIRTNTLKTQRRELAQALINRGVNLEPIGKWSKVGLQVFESQVPIGATPEYLAGHYILQAASSFLPVMALAPQPNERILDMSSAPGGKVTYVAALQKNTGIIFANDSNKARTKALSANIHRLGVRNAIVCNYDGRKFPNEVIGGFDRVLLDAPCSGTGVIYKDQSVKTNKSERDFDTLSHLQRQLLLSAIDSVNADSKTGGFIVYSTCSITVDEDEAVIQYALKKRPNVKLVSTGLEFGREGFTRFREKRFHPSLKLTRRYYPHVHNIDGFFVAKLKKISDKIPTVNVADDMKDGTNNDVEIEKNSTEIDNITFNDEADKEIIEQNRRKWLKSKGYKVAKKKD</sequence>
<protein>
    <recommendedName>
        <fullName>25S rRNA (cytosine-C(5))-methyltransferase nop2</fullName>
        <ecNumber evidence="2">2.1.1.-</ecNumber>
    </recommendedName>
    <alternativeName>
        <fullName>Nucleolar protein 2</fullName>
    </alternativeName>
</protein>
<organism>
    <name type="scientific">Schizosaccharomyces pombe (strain 972 / ATCC 24843)</name>
    <name type="common">Fission yeast</name>
    <dbReference type="NCBI Taxonomy" id="284812"/>
    <lineage>
        <taxon>Eukaryota</taxon>
        <taxon>Fungi</taxon>
        <taxon>Dikarya</taxon>
        <taxon>Ascomycota</taxon>
        <taxon>Taphrinomycotina</taxon>
        <taxon>Schizosaccharomycetes</taxon>
        <taxon>Schizosaccharomycetales</taxon>
        <taxon>Schizosaccharomycetaceae</taxon>
        <taxon>Schizosaccharomyces</taxon>
    </lineage>
</organism>
<keyword id="KW-0002">3D-structure</keyword>
<keyword id="KW-0489">Methyltransferase</keyword>
<keyword id="KW-0539">Nucleus</keyword>
<keyword id="KW-0597">Phosphoprotein</keyword>
<keyword id="KW-1185">Reference proteome</keyword>
<keyword id="KW-0690">Ribosome biogenesis</keyword>
<keyword id="KW-0694">RNA-binding</keyword>
<keyword id="KW-0949">S-adenosyl-L-methionine</keyword>
<keyword id="KW-0808">Transferase</keyword>
<comment type="function">
    <text evidence="1">S-adenosyl-L-methionine-dependent methyltransferase that specifically methylates the C(5) position of a cytosine in 25S rRNA. Required for 60S ribosomal subunit synthesis and processing (By similarity).</text>
</comment>
<comment type="catalytic activity">
    <reaction evidence="2">
        <text>a cytidine in 25S rRNA + S-adenosyl-L-methionine = a 5-methylcytidine in 25S rRNA + S-adenosyl-L-homocysteine + H(+)</text>
        <dbReference type="Rhea" id="RHEA:47780"/>
        <dbReference type="Rhea" id="RHEA-COMP:11911"/>
        <dbReference type="Rhea" id="RHEA-COMP:11912"/>
        <dbReference type="ChEBI" id="CHEBI:15378"/>
        <dbReference type="ChEBI" id="CHEBI:57856"/>
        <dbReference type="ChEBI" id="CHEBI:59789"/>
        <dbReference type="ChEBI" id="CHEBI:74483"/>
        <dbReference type="ChEBI" id="CHEBI:82748"/>
    </reaction>
</comment>
<comment type="subcellular location">
    <subcellularLocation>
        <location evidence="5">Nucleus</location>
    </subcellularLocation>
    <subcellularLocation>
        <location evidence="1">Nucleus</location>
        <location evidence="1">Nucleolus</location>
    </subcellularLocation>
</comment>
<comment type="similarity">
    <text evidence="3">Belongs to the class I-like SAM-binding methyltransferase superfamily. RsmB/NOP family.</text>
</comment>
<evidence type="ECO:0000250" key="1"/>
<evidence type="ECO:0000250" key="2">
    <source>
        <dbReference type="UniProtKB" id="P40991"/>
    </source>
</evidence>
<evidence type="ECO:0000255" key="3">
    <source>
        <dbReference type="PROSITE-ProRule" id="PRU01023"/>
    </source>
</evidence>
<evidence type="ECO:0000256" key="4">
    <source>
        <dbReference type="SAM" id="MobiDB-lite"/>
    </source>
</evidence>
<evidence type="ECO:0000269" key="5">
    <source>
    </source>
</evidence>
<evidence type="ECO:0000269" key="6">
    <source>
    </source>
</evidence>
<gene>
    <name type="primary">nop2</name>
    <name type="ORF">SPBP8B7.20c</name>
</gene>
<name>NOP2_SCHPO</name>
<proteinExistence type="evidence at protein level"/>
<dbReference type="EC" id="2.1.1.-" evidence="2"/>
<dbReference type="EMBL" id="CU329671">
    <property type="protein sequence ID" value="CAA21805.1"/>
    <property type="molecule type" value="Genomic_DNA"/>
</dbReference>
<dbReference type="PIR" id="T40814">
    <property type="entry name" value="T40814"/>
</dbReference>
<dbReference type="RefSeq" id="NP_596527.1">
    <property type="nucleotide sequence ID" value="NM_001022448.2"/>
</dbReference>
<dbReference type="PDB" id="8ESQ">
    <property type="method" value="EM"/>
    <property type="resolution" value="2.80 A"/>
    <property type="chains" value="q=1-608"/>
</dbReference>
<dbReference type="PDB" id="8ESR">
    <property type="method" value="EM"/>
    <property type="resolution" value="3.20 A"/>
    <property type="chains" value="q=1-608"/>
</dbReference>
<dbReference type="PDBsum" id="8ESQ"/>
<dbReference type="PDBsum" id="8ESR"/>
<dbReference type="SMR" id="O94268"/>
<dbReference type="BioGRID" id="277788">
    <property type="interactions" value="11"/>
</dbReference>
<dbReference type="FunCoup" id="O94268">
    <property type="interactions" value="238"/>
</dbReference>
<dbReference type="STRING" id="284812.O94268"/>
<dbReference type="iPTMnet" id="O94268"/>
<dbReference type="PaxDb" id="4896-SPBP8B7.20c.1"/>
<dbReference type="EnsemblFungi" id="SPBP8B7.20c.1">
    <property type="protein sequence ID" value="SPBP8B7.20c.1:pep"/>
    <property type="gene ID" value="SPBP8B7.20c"/>
</dbReference>
<dbReference type="GeneID" id="2541274"/>
<dbReference type="KEGG" id="spo:2541274"/>
<dbReference type="PomBase" id="SPBP8B7.20c">
    <property type="gene designation" value="nop2"/>
</dbReference>
<dbReference type="VEuPathDB" id="FungiDB:SPBP8B7.20c"/>
<dbReference type="eggNOG" id="KOG1122">
    <property type="taxonomic scope" value="Eukaryota"/>
</dbReference>
<dbReference type="HOGENOM" id="CLU_005316_3_2_1"/>
<dbReference type="InParanoid" id="O94268"/>
<dbReference type="OMA" id="PIGSWTK"/>
<dbReference type="PhylomeDB" id="O94268"/>
<dbReference type="PRO" id="PR:O94268"/>
<dbReference type="Proteomes" id="UP000002485">
    <property type="component" value="Chromosome II"/>
</dbReference>
<dbReference type="GO" id="GO:0005730">
    <property type="term" value="C:nucleolus"/>
    <property type="evidence" value="ECO:0000318"/>
    <property type="project" value="GO_Central"/>
</dbReference>
<dbReference type="GO" id="GO:0005634">
    <property type="term" value="C:nucleus"/>
    <property type="evidence" value="ECO:0007005"/>
    <property type="project" value="PomBase"/>
</dbReference>
<dbReference type="GO" id="GO:0003723">
    <property type="term" value="F:RNA binding"/>
    <property type="evidence" value="ECO:0007669"/>
    <property type="project" value="UniProtKB-KW"/>
</dbReference>
<dbReference type="GO" id="GO:0009383">
    <property type="term" value="F:rRNA (cytosine-C5-)-methyltransferase activity"/>
    <property type="evidence" value="ECO:0000318"/>
    <property type="project" value="GO_Central"/>
</dbReference>
<dbReference type="GO" id="GO:0000470">
    <property type="term" value="P:maturation of LSU-rRNA"/>
    <property type="evidence" value="ECO:0000318"/>
    <property type="project" value="GO_Central"/>
</dbReference>
<dbReference type="GO" id="GO:0070475">
    <property type="term" value="P:rRNA base methylation"/>
    <property type="evidence" value="ECO:0000318"/>
    <property type="project" value="GO_Central"/>
</dbReference>
<dbReference type="FunFam" id="3.30.70.1170:FF:000001">
    <property type="entry name" value="Ribosomal RNA methyltransferase Nop2"/>
    <property type="match status" value="1"/>
</dbReference>
<dbReference type="Gene3D" id="3.30.70.1170">
    <property type="entry name" value="Sun protein, domain 3"/>
    <property type="match status" value="1"/>
</dbReference>
<dbReference type="Gene3D" id="3.40.50.150">
    <property type="entry name" value="Vaccinia Virus protein VP39"/>
    <property type="match status" value="1"/>
</dbReference>
<dbReference type="InterPro" id="IPR049560">
    <property type="entry name" value="MeTrfase_RsmB-F_NOP2_cat"/>
</dbReference>
<dbReference type="InterPro" id="IPR001678">
    <property type="entry name" value="MeTrfase_RsmB-F_NOP2_dom"/>
</dbReference>
<dbReference type="InterPro" id="IPR011023">
    <property type="entry name" value="Nop2p"/>
</dbReference>
<dbReference type="InterPro" id="IPR023267">
    <property type="entry name" value="RCMT"/>
</dbReference>
<dbReference type="InterPro" id="IPR023273">
    <property type="entry name" value="RCMT_NOP2"/>
</dbReference>
<dbReference type="InterPro" id="IPR054728">
    <property type="entry name" value="RsmB-like_ferredoxin"/>
</dbReference>
<dbReference type="InterPro" id="IPR018314">
    <property type="entry name" value="RsmB/NOL1/NOP2-like_CS"/>
</dbReference>
<dbReference type="InterPro" id="IPR029063">
    <property type="entry name" value="SAM-dependent_MTases_sf"/>
</dbReference>
<dbReference type="NCBIfam" id="TIGR00446">
    <property type="entry name" value="nop2p"/>
    <property type="match status" value="1"/>
</dbReference>
<dbReference type="PANTHER" id="PTHR22807:SF30">
    <property type="entry name" value="28S RRNA (CYTOSINE(4447)-C(5))-METHYLTRANSFERASE-RELATED"/>
    <property type="match status" value="1"/>
</dbReference>
<dbReference type="PANTHER" id="PTHR22807">
    <property type="entry name" value="NOP2 YEAST -RELATED NOL1/NOP2/FMU SUN DOMAIN-CONTAINING"/>
    <property type="match status" value="1"/>
</dbReference>
<dbReference type="Pfam" id="PF01189">
    <property type="entry name" value="Methyltr_RsmB-F"/>
    <property type="match status" value="1"/>
</dbReference>
<dbReference type="Pfam" id="PF22458">
    <property type="entry name" value="RsmF-B_ferredox"/>
    <property type="match status" value="1"/>
</dbReference>
<dbReference type="PRINTS" id="PR02008">
    <property type="entry name" value="RCMTFAMILY"/>
</dbReference>
<dbReference type="PRINTS" id="PR02012">
    <property type="entry name" value="RCMTNOP2"/>
</dbReference>
<dbReference type="SUPFAM" id="SSF53335">
    <property type="entry name" value="S-adenosyl-L-methionine-dependent methyltransferases"/>
    <property type="match status" value="1"/>
</dbReference>
<dbReference type="PROSITE" id="PS01153">
    <property type="entry name" value="NOL1_NOP2_SUN"/>
    <property type="match status" value="1"/>
</dbReference>
<dbReference type="PROSITE" id="PS51686">
    <property type="entry name" value="SAM_MT_RSMB_NOP"/>
    <property type="match status" value="1"/>
</dbReference>
<reference key="1">
    <citation type="journal article" date="2002" name="Nature">
        <title>The genome sequence of Schizosaccharomyces pombe.</title>
        <authorList>
            <person name="Wood V."/>
            <person name="Gwilliam R."/>
            <person name="Rajandream M.A."/>
            <person name="Lyne M.H."/>
            <person name="Lyne R."/>
            <person name="Stewart A."/>
            <person name="Sgouros J.G."/>
            <person name="Peat N."/>
            <person name="Hayles J."/>
            <person name="Baker S.G."/>
            <person name="Basham D."/>
            <person name="Bowman S."/>
            <person name="Brooks K."/>
            <person name="Brown D."/>
            <person name="Brown S."/>
            <person name="Chillingworth T."/>
            <person name="Churcher C.M."/>
            <person name="Collins M."/>
            <person name="Connor R."/>
            <person name="Cronin A."/>
            <person name="Davis P."/>
            <person name="Feltwell T."/>
            <person name="Fraser A."/>
            <person name="Gentles S."/>
            <person name="Goble A."/>
            <person name="Hamlin N."/>
            <person name="Harris D.E."/>
            <person name="Hidalgo J."/>
            <person name="Hodgson G."/>
            <person name="Holroyd S."/>
            <person name="Hornsby T."/>
            <person name="Howarth S."/>
            <person name="Huckle E.J."/>
            <person name="Hunt S."/>
            <person name="Jagels K."/>
            <person name="James K.D."/>
            <person name="Jones L."/>
            <person name="Jones M."/>
            <person name="Leather S."/>
            <person name="McDonald S."/>
            <person name="McLean J."/>
            <person name="Mooney P."/>
            <person name="Moule S."/>
            <person name="Mungall K.L."/>
            <person name="Murphy L.D."/>
            <person name="Niblett D."/>
            <person name="Odell C."/>
            <person name="Oliver K."/>
            <person name="O'Neil S."/>
            <person name="Pearson D."/>
            <person name="Quail M.A."/>
            <person name="Rabbinowitsch E."/>
            <person name="Rutherford K.M."/>
            <person name="Rutter S."/>
            <person name="Saunders D."/>
            <person name="Seeger K."/>
            <person name="Sharp S."/>
            <person name="Skelton J."/>
            <person name="Simmonds M.N."/>
            <person name="Squares R."/>
            <person name="Squares S."/>
            <person name="Stevens K."/>
            <person name="Taylor K."/>
            <person name="Taylor R.G."/>
            <person name="Tivey A."/>
            <person name="Walsh S.V."/>
            <person name="Warren T."/>
            <person name="Whitehead S."/>
            <person name="Woodward J.R."/>
            <person name="Volckaert G."/>
            <person name="Aert R."/>
            <person name="Robben J."/>
            <person name="Grymonprez B."/>
            <person name="Weltjens I."/>
            <person name="Vanstreels E."/>
            <person name="Rieger M."/>
            <person name="Schaefer M."/>
            <person name="Mueller-Auer S."/>
            <person name="Gabel C."/>
            <person name="Fuchs M."/>
            <person name="Duesterhoeft A."/>
            <person name="Fritzc C."/>
            <person name="Holzer E."/>
            <person name="Moestl D."/>
            <person name="Hilbert H."/>
            <person name="Borzym K."/>
            <person name="Langer I."/>
            <person name="Beck A."/>
            <person name="Lehrach H."/>
            <person name="Reinhardt R."/>
            <person name="Pohl T.M."/>
            <person name="Eger P."/>
            <person name="Zimmermann W."/>
            <person name="Wedler H."/>
            <person name="Wambutt R."/>
            <person name="Purnelle B."/>
            <person name="Goffeau A."/>
            <person name="Cadieu E."/>
            <person name="Dreano S."/>
            <person name="Gloux S."/>
            <person name="Lelaure V."/>
            <person name="Mottier S."/>
            <person name="Galibert F."/>
            <person name="Aves S.J."/>
            <person name="Xiang Z."/>
            <person name="Hunt C."/>
            <person name="Moore K."/>
            <person name="Hurst S.M."/>
            <person name="Lucas M."/>
            <person name="Rochet M."/>
            <person name="Gaillardin C."/>
            <person name="Tallada V.A."/>
            <person name="Garzon A."/>
            <person name="Thode G."/>
            <person name="Daga R.R."/>
            <person name="Cruzado L."/>
            <person name="Jimenez J."/>
            <person name="Sanchez M."/>
            <person name="del Rey F."/>
            <person name="Benito J."/>
            <person name="Dominguez A."/>
            <person name="Revuelta J.L."/>
            <person name="Moreno S."/>
            <person name="Armstrong J."/>
            <person name="Forsburg S.L."/>
            <person name="Cerutti L."/>
            <person name="Lowe T."/>
            <person name="McCombie W.R."/>
            <person name="Paulsen I."/>
            <person name="Potashkin J."/>
            <person name="Shpakovski G.V."/>
            <person name="Ussery D."/>
            <person name="Barrell B.G."/>
            <person name="Nurse P."/>
        </authorList>
    </citation>
    <scope>NUCLEOTIDE SEQUENCE [LARGE SCALE GENOMIC DNA]</scope>
    <source>
        <strain>972 / ATCC 24843</strain>
    </source>
</reference>
<reference key="2">
    <citation type="journal article" date="2006" name="Nat. Biotechnol.">
        <title>ORFeome cloning and global analysis of protein localization in the fission yeast Schizosaccharomyces pombe.</title>
        <authorList>
            <person name="Matsuyama A."/>
            <person name="Arai R."/>
            <person name="Yashiroda Y."/>
            <person name="Shirai A."/>
            <person name="Kamata A."/>
            <person name="Sekido S."/>
            <person name="Kobayashi Y."/>
            <person name="Hashimoto A."/>
            <person name="Hamamoto M."/>
            <person name="Hiraoka Y."/>
            <person name="Horinouchi S."/>
            <person name="Yoshida M."/>
        </authorList>
    </citation>
    <scope>SUBCELLULAR LOCATION [LARGE SCALE ANALYSIS]</scope>
</reference>
<reference key="3">
    <citation type="journal article" date="2008" name="J. Proteome Res.">
        <title>Phosphoproteome analysis of fission yeast.</title>
        <authorList>
            <person name="Wilson-Grady J.T."/>
            <person name="Villen J."/>
            <person name="Gygi S.P."/>
        </authorList>
    </citation>
    <scope>PHOSPHORYLATION [LARGE SCALE ANALYSIS] AT SER-58 AND SER-60</scope>
    <scope>IDENTIFICATION BY MASS SPECTROMETRY</scope>
</reference>